<sequence>MSPQTETKASVGFKAGVKEYKLTYYTPEYETKDTDILAAFRVTPQPGVPPEEAGAAVAAESSTGTWTTVWTDGLTSLDRYKGRCYHIEPVPGEETQFIAYVAYPLDLFEEGSVTNMFTSIVGNVFGFKALAALRLEDLRIPPAYTKTFQGPPHGIQVERDKLNKYGRPLLGCTIKPKLGLSAKNYGRAVYECLRGGLDFTKDDENVNSQPFMRWRDRFLFCAEAIYKSQAETGEIKGHYLNATAGTCEEMIKRAVFARELGVPIVMHDYLTGGFTANTSLSHYCRDNGLLLHIHRAMHAVIDRQKNHGMHFRVLAKALRLSGGDHIHAGTVVGKLEGDRESTLGFVDLLRDDYVEKDRSRGIFFTQDWVSLPGVLPVASGGIHVWHMPALTEIFGDDSVLQFGGGTLGHPWGNAPGAVANRVALEACVQARNEGRDLAVEGNEIIREACKWSPELAAACEVWKEIRFNFPTIDKLDGQE</sequence>
<gene>
    <name evidence="2" type="primary">rbcL</name>
</gene>
<feature type="propeptide" id="PRO_0000299987" evidence="2">
    <location>
        <begin position="1"/>
        <end position="2"/>
    </location>
</feature>
<feature type="chain" id="PRO_0000299988" description="Ribulose bisphosphate carboxylase large chain">
    <location>
        <begin position="3"/>
        <end position="479"/>
    </location>
</feature>
<feature type="active site" description="Proton acceptor" evidence="2">
    <location>
        <position position="175"/>
    </location>
</feature>
<feature type="active site" description="Proton acceptor" evidence="2">
    <location>
        <position position="294"/>
    </location>
</feature>
<feature type="binding site" description="in homodimeric partner" evidence="2">
    <location>
        <position position="123"/>
    </location>
    <ligand>
        <name>substrate</name>
    </ligand>
</feature>
<feature type="binding site" evidence="2">
    <location>
        <position position="173"/>
    </location>
    <ligand>
        <name>substrate</name>
    </ligand>
</feature>
<feature type="binding site" evidence="2">
    <location>
        <position position="177"/>
    </location>
    <ligand>
        <name>substrate</name>
    </ligand>
</feature>
<feature type="binding site" description="via carbamate group" evidence="2">
    <location>
        <position position="201"/>
    </location>
    <ligand>
        <name>Mg(2+)</name>
        <dbReference type="ChEBI" id="CHEBI:18420"/>
    </ligand>
</feature>
<feature type="binding site" evidence="2">
    <location>
        <position position="203"/>
    </location>
    <ligand>
        <name>Mg(2+)</name>
        <dbReference type="ChEBI" id="CHEBI:18420"/>
    </ligand>
</feature>
<feature type="binding site" evidence="2">
    <location>
        <position position="204"/>
    </location>
    <ligand>
        <name>Mg(2+)</name>
        <dbReference type="ChEBI" id="CHEBI:18420"/>
    </ligand>
</feature>
<feature type="binding site" evidence="2">
    <location>
        <position position="295"/>
    </location>
    <ligand>
        <name>substrate</name>
    </ligand>
</feature>
<feature type="binding site" evidence="2">
    <location>
        <position position="327"/>
    </location>
    <ligand>
        <name>substrate</name>
    </ligand>
</feature>
<feature type="binding site" evidence="2">
    <location>
        <position position="379"/>
    </location>
    <ligand>
        <name>substrate</name>
    </ligand>
</feature>
<feature type="site" description="Transition state stabilizer" evidence="2">
    <location>
        <position position="334"/>
    </location>
</feature>
<feature type="modified residue" description="N6-carboxylysine" evidence="2">
    <location>
        <position position="201"/>
    </location>
</feature>
<feature type="modified residue" description="Phosphoserine" evidence="1">
    <location>
        <position position="208"/>
    </location>
</feature>
<feature type="modified residue" description="Phosphothreonine" evidence="1">
    <location>
        <position position="330"/>
    </location>
</feature>
<feature type="disulfide bond" description="Interchain; in linked form" evidence="2">
    <location>
        <position position="247"/>
    </location>
</feature>
<geneLocation type="chloroplast"/>
<proteinExistence type="inferred from homology"/>
<protein>
    <recommendedName>
        <fullName evidence="2">Ribulose bisphosphate carboxylase large chain</fullName>
        <shortName evidence="2">RuBisCO large subunit</shortName>
        <ecNumber evidence="2">4.1.1.39</ecNumber>
    </recommendedName>
</protein>
<comment type="function">
    <text evidence="2">RuBisCO catalyzes two reactions: the carboxylation of D-ribulose 1,5-bisphosphate, the primary event in carbon dioxide fixation, as well as the oxidative fragmentation of the pentose substrate in the photorespiration process. Both reactions occur simultaneously and in competition at the same active site.</text>
</comment>
<comment type="catalytic activity">
    <reaction evidence="2">
        <text>2 (2R)-3-phosphoglycerate + 2 H(+) = D-ribulose 1,5-bisphosphate + CO2 + H2O</text>
        <dbReference type="Rhea" id="RHEA:23124"/>
        <dbReference type="ChEBI" id="CHEBI:15377"/>
        <dbReference type="ChEBI" id="CHEBI:15378"/>
        <dbReference type="ChEBI" id="CHEBI:16526"/>
        <dbReference type="ChEBI" id="CHEBI:57870"/>
        <dbReference type="ChEBI" id="CHEBI:58272"/>
        <dbReference type="EC" id="4.1.1.39"/>
    </reaction>
</comment>
<comment type="catalytic activity">
    <reaction evidence="2">
        <text>D-ribulose 1,5-bisphosphate + O2 = 2-phosphoglycolate + (2R)-3-phosphoglycerate + 2 H(+)</text>
        <dbReference type="Rhea" id="RHEA:36631"/>
        <dbReference type="ChEBI" id="CHEBI:15378"/>
        <dbReference type="ChEBI" id="CHEBI:15379"/>
        <dbReference type="ChEBI" id="CHEBI:57870"/>
        <dbReference type="ChEBI" id="CHEBI:58033"/>
        <dbReference type="ChEBI" id="CHEBI:58272"/>
    </reaction>
</comment>
<comment type="cofactor">
    <cofactor evidence="2">
        <name>Mg(2+)</name>
        <dbReference type="ChEBI" id="CHEBI:18420"/>
    </cofactor>
    <text evidence="2">Binds 1 Mg(2+) ion per subunit.</text>
</comment>
<comment type="subunit">
    <text evidence="2">Heterohexadecamer of 8 large chains and 8 small chains; disulfide-linked. The disulfide link is formed within the large subunit homodimers.</text>
</comment>
<comment type="subcellular location">
    <subcellularLocation>
        <location>Plastid</location>
        <location>Chloroplast</location>
    </subcellularLocation>
</comment>
<comment type="PTM">
    <text evidence="2">The disulfide bond which can form in the large chain dimeric partners within the hexadecamer appears to be associated with oxidative stress and protein turnover.</text>
</comment>
<comment type="miscellaneous">
    <text evidence="2">The basic functional RuBisCO is composed of a large chain homodimer in a 'head-to-tail' conformation. In form I RuBisCO this homodimer is arranged in a barrel-like tetramer with the small subunits forming a tetrameric 'cap' on each end of the 'barrel'.</text>
</comment>
<comment type="similarity">
    <text evidence="2">Belongs to the RuBisCO large chain family. Type I subfamily.</text>
</comment>
<dbReference type="EC" id="4.1.1.39" evidence="2"/>
<dbReference type="EMBL" id="AP009371">
    <property type="protein sequence ID" value="BAF50205.1"/>
    <property type="molecule type" value="Genomic_DNA"/>
</dbReference>
<dbReference type="RefSeq" id="YP_001123381.1">
    <property type="nucleotide sequence ID" value="NC_009270.1"/>
</dbReference>
<dbReference type="SMR" id="A4QKK0"/>
<dbReference type="GeneID" id="4961695"/>
<dbReference type="GO" id="GO:0009507">
    <property type="term" value="C:chloroplast"/>
    <property type="evidence" value="ECO:0007669"/>
    <property type="project" value="UniProtKB-SubCell"/>
</dbReference>
<dbReference type="GO" id="GO:0000287">
    <property type="term" value="F:magnesium ion binding"/>
    <property type="evidence" value="ECO:0007669"/>
    <property type="project" value="UniProtKB-UniRule"/>
</dbReference>
<dbReference type="GO" id="GO:0004497">
    <property type="term" value="F:monooxygenase activity"/>
    <property type="evidence" value="ECO:0007669"/>
    <property type="project" value="UniProtKB-KW"/>
</dbReference>
<dbReference type="GO" id="GO:0016984">
    <property type="term" value="F:ribulose-bisphosphate carboxylase activity"/>
    <property type="evidence" value="ECO:0007669"/>
    <property type="project" value="UniProtKB-UniRule"/>
</dbReference>
<dbReference type="GO" id="GO:0009853">
    <property type="term" value="P:photorespiration"/>
    <property type="evidence" value="ECO:0007669"/>
    <property type="project" value="UniProtKB-KW"/>
</dbReference>
<dbReference type="GO" id="GO:0019253">
    <property type="term" value="P:reductive pentose-phosphate cycle"/>
    <property type="evidence" value="ECO:0007669"/>
    <property type="project" value="UniProtKB-UniRule"/>
</dbReference>
<dbReference type="CDD" id="cd08212">
    <property type="entry name" value="RuBisCO_large_I"/>
    <property type="match status" value="1"/>
</dbReference>
<dbReference type="FunFam" id="3.20.20.110:FF:000001">
    <property type="entry name" value="Ribulose bisphosphate carboxylase large chain"/>
    <property type="match status" value="1"/>
</dbReference>
<dbReference type="FunFam" id="3.30.70.150:FF:000001">
    <property type="entry name" value="Ribulose bisphosphate carboxylase large chain"/>
    <property type="match status" value="1"/>
</dbReference>
<dbReference type="Gene3D" id="3.20.20.110">
    <property type="entry name" value="Ribulose bisphosphate carboxylase, large subunit, C-terminal domain"/>
    <property type="match status" value="1"/>
</dbReference>
<dbReference type="Gene3D" id="3.30.70.150">
    <property type="entry name" value="RuBisCO large subunit, N-terminal domain"/>
    <property type="match status" value="1"/>
</dbReference>
<dbReference type="HAMAP" id="MF_01338">
    <property type="entry name" value="RuBisCO_L_type1"/>
    <property type="match status" value="1"/>
</dbReference>
<dbReference type="InterPro" id="IPR033966">
    <property type="entry name" value="RuBisCO"/>
</dbReference>
<dbReference type="InterPro" id="IPR020878">
    <property type="entry name" value="RuBisCo_large_chain_AS"/>
</dbReference>
<dbReference type="InterPro" id="IPR000685">
    <property type="entry name" value="RuBisCO_lsu_C"/>
</dbReference>
<dbReference type="InterPro" id="IPR036376">
    <property type="entry name" value="RuBisCO_lsu_C_sf"/>
</dbReference>
<dbReference type="InterPro" id="IPR017443">
    <property type="entry name" value="RuBisCO_lsu_fd_N"/>
</dbReference>
<dbReference type="InterPro" id="IPR036422">
    <property type="entry name" value="RuBisCO_lsu_N_sf"/>
</dbReference>
<dbReference type="InterPro" id="IPR020888">
    <property type="entry name" value="RuBisCO_lsuI"/>
</dbReference>
<dbReference type="NCBIfam" id="NF003252">
    <property type="entry name" value="PRK04208.1"/>
    <property type="match status" value="1"/>
</dbReference>
<dbReference type="PANTHER" id="PTHR42704">
    <property type="entry name" value="RIBULOSE BISPHOSPHATE CARBOXYLASE"/>
    <property type="match status" value="1"/>
</dbReference>
<dbReference type="PANTHER" id="PTHR42704:SF16">
    <property type="entry name" value="RIBULOSE BISPHOSPHATE CARBOXYLASE LARGE CHAIN"/>
    <property type="match status" value="1"/>
</dbReference>
<dbReference type="Pfam" id="PF00016">
    <property type="entry name" value="RuBisCO_large"/>
    <property type="match status" value="1"/>
</dbReference>
<dbReference type="Pfam" id="PF02788">
    <property type="entry name" value="RuBisCO_large_N"/>
    <property type="match status" value="1"/>
</dbReference>
<dbReference type="SFLD" id="SFLDG01052">
    <property type="entry name" value="RuBisCO"/>
    <property type="match status" value="1"/>
</dbReference>
<dbReference type="SFLD" id="SFLDS00014">
    <property type="entry name" value="RuBisCO"/>
    <property type="match status" value="1"/>
</dbReference>
<dbReference type="SFLD" id="SFLDG00301">
    <property type="entry name" value="RuBisCO-like_proteins"/>
    <property type="match status" value="1"/>
</dbReference>
<dbReference type="SUPFAM" id="SSF51649">
    <property type="entry name" value="RuBisCo, C-terminal domain"/>
    <property type="match status" value="1"/>
</dbReference>
<dbReference type="SUPFAM" id="SSF54966">
    <property type="entry name" value="RuBisCO, large subunit, small (N-terminal) domain"/>
    <property type="match status" value="1"/>
</dbReference>
<dbReference type="PROSITE" id="PS00157">
    <property type="entry name" value="RUBISCO_LARGE"/>
    <property type="match status" value="1"/>
</dbReference>
<keyword id="KW-0113">Calvin cycle</keyword>
<keyword id="KW-0120">Carbon dioxide fixation</keyword>
<keyword id="KW-0150">Chloroplast</keyword>
<keyword id="KW-1015">Disulfide bond</keyword>
<keyword id="KW-0456">Lyase</keyword>
<keyword id="KW-0460">Magnesium</keyword>
<keyword id="KW-0479">Metal-binding</keyword>
<keyword id="KW-0503">Monooxygenase</keyword>
<keyword id="KW-0560">Oxidoreductase</keyword>
<keyword id="KW-0597">Phosphoprotein</keyword>
<keyword id="KW-0601">Photorespiration</keyword>
<keyword id="KW-0602">Photosynthesis</keyword>
<keyword id="KW-0934">Plastid</keyword>
<organism>
    <name type="scientific">Capsella bursa-pastoris</name>
    <name type="common">Shepherd's purse</name>
    <name type="synonym">Thlaspi bursa-pastoris</name>
    <dbReference type="NCBI Taxonomy" id="3719"/>
    <lineage>
        <taxon>Eukaryota</taxon>
        <taxon>Viridiplantae</taxon>
        <taxon>Streptophyta</taxon>
        <taxon>Embryophyta</taxon>
        <taxon>Tracheophyta</taxon>
        <taxon>Spermatophyta</taxon>
        <taxon>Magnoliopsida</taxon>
        <taxon>eudicotyledons</taxon>
        <taxon>Gunneridae</taxon>
        <taxon>Pentapetalae</taxon>
        <taxon>rosids</taxon>
        <taxon>malvids</taxon>
        <taxon>Brassicales</taxon>
        <taxon>Brassicaceae</taxon>
        <taxon>Camelineae</taxon>
        <taxon>Capsella</taxon>
    </lineage>
</organism>
<accession>A4QKK0</accession>
<reference key="1">
    <citation type="submission" date="2007-03" db="EMBL/GenBank/DDBJ databases">
        <title>Sequencing analysis of Capsella bursa-pastoris JO22 chloroplast DNA.</title>
        <authorList>
            <person name="Hosouchi T."/>
            <person name="Tsuruoka H."/>
            <person name="Kotani H."/>
        </authorList>
    </citation>
    <scope>NUCLEOTIDE SEQUENCE [LARGE SCALE GENOMIC DNA]</scope>
</reference>
<name>RBL_CAPBU</name>
<evidence type="ECO:0000250" key="1">
    <source>
        <dbReference type="UniProtKB" id="O03042"/>
    </source>
</evidence>
<evidence type="ECO:0000255" key="2">
    <source>
        <dbReference type="HAMAP-Rule" id="MF_01338"/>
    </source>
</evidence>